<sequence length="184" mass="19811">MKKQDISVKTVVAIGIGAAVFVILGRFVVIPTGFPNTNIETSYAFLALISAIFGPFAGLMTGLVGHAIKDFTTYGSAWWSWVICSGIIGCLYGWIGLKLNLSSGLFSRKSMIYFNIGQIIANIICWALIAPTLDILIYNEPANKVYTQGVISAVLNIISVGIIGTILLKAYASSQIKKGSLRKE</sequence>
<gene>
    <name type="ordered locus">SAV2685</name>
</gene>
<comment type="subcellular location">
    <subcellularLocation>
        <location evidence="1">Cell membrane</location>
        <topology evidence="1">Multi-pass membrane protein</topology>
    </subcellularLocation>
</comment>
<comment type="similarity">
    <text evidence="1">Belongs to the UPF0397 family.</text>
</comment>
<proteinExistence type="inferred from homology"/>
<evidence type="ECO:0000255" key="1">
    <source>
        <dbReference type="HAMAP-Rule" id="MF_01572"/>
    </source>
</evidence>
<organism>
    <name type="scientific">Staphylococcus aureus (strain Mu50 / ATCC 700699)</name>
    <dbReference type="NCBI Taxonomy" id="158878"/>
    <lineage>
        <taxon>Bacteria</taxon>
        <taxon>Bacillati</taxon>
        <taxon>Bacillota</taxon>
        <taxon>Bacilli</taxon>
        <taxon>Bacillales</taxon>
        <taxon>Staphylococcaceae</taxon>
        <taxon>Staphylococcus</taxon>
    </lineage>
</organism>
<dbReference type="EMBL" id="BA000017">
    <property type="protein sequence ID" value="BAB58847.1"/>
    <property type="molecule type" value="Genomic_DNA"/>
</dbReference>
<dbReference type="RefSeq" id="WP_000743711.1">
    <property type="nucleotide sequence ID" value="NC_002758.2"/>
</dbReference>
<dbReference type="KEGG" id="sav:SAV2685"/>
<dbReference type="HOGENOM" id="CLU_120023_0_0_9"/>
<dbReference type="PhylomeDB" id="Q99QV6"/>
<dbReference type="Proteomes" id="UP000002481">
    <property type="component" value="Chromosome"/>
</dbReference>
<dbReference type="GO" id="GO:0005886">
    <property type="term" value="C:plasma membrane"/>
    <property type="evidence" value="ECO:0007669"/>
    <property type="project" value="UniProtKB-SubCell"/>
</dbReference>
<dbReference type="Gene3D" id="1.10.1760.20">
    <property type="match status" value="1"/>
</dbReference>
<dbReference type="HAMAP" id="MF_01572">
    <property type="entry name" value="UPF0397"/>
    <property type="match status" value="1"/>
</dbReference>
<dbReference type="InterPro" id="IPR009825">
    <property type="entry name" value="ECF_substrate-spec-like"/>
</dbReference>
<dbReference type="InterPro" id="IPR022914">
    <property type="entry name" value="UPF0397"/>
</dbReference>
<dbReference type="NCBIfam" id="NF010182">
    <property type="entry name" value="PRK13661.1"/>
    <property type="match status" value="1"/>
</dbReference>
<dbReference type="PANTHER" id="PTHR37815">
    <property type="entry name" value="UPF0397 PROTEIN BC_2624-RELATED"/>
    <property type="match status" value="1"/>
</dbReference>
<dbReference type="PANTHER" id="PTHR37815:SF3">
    <property type="entry name" value="UPF0397 PROTEIN SPR0429"/>
    <property type="match status" value="1"/>
</dbReference>
<dbReference type="Pfam" id="PF07155">
    <property type="entry name" value="ECF-ribofla_trS"/>
    <property type="match status" value="1"/>
</dbReference>
<reference key="1">
    <citation type="journal article" date="2001" name="Lancet">
        <title>Whole genome sequencing of meticillin-resistant Staphylococcus aureus.</title>
        <authorList>
            <person name="Kuroda M."/>
            <person name="Ohta T."/>
            <person name="Uchiyama I."/>
            <person name="Baba T."/>
            <person name="Yuzawa H."/>
            <person name="Kobayashi I."/>
            <person name="Cui L."/>
            <person name="Oguchi A."/>
            <person name="Aoki K."/>
            <person name="Nagai Y."/>
            <person name="Lian J.-Q."/>
            <person name="Ito T."/>
            <person name="Kanamori M."/>
            <person name="Matsumaru H."/>
            <person name="Maruyama A."/>
            <person name="Murakami H."/>
            <person name="Hosoyama A."/>
            <person name="Mizutani-Ui Y."/>
            <person name="Takahashi N.K."/>
            <person name="Sawano T."/>
            <person name="Inoue R."/>
            <person name="Kaito C."/>
            <person name="Sekimizu K."/>
            <person name="Hirakawa H."/>
            <person name="Kuhara S."/>
            <person name="Goto S."/>
            <person name="Yabuzaki J."/>
            <person name="Kanehisa M."/>
            <person name="Yamashita A."/>
            <person name="Oshima K."/>
            <person name="Furuya K."/>
            <person name="Yoshino C."/>
            <person name="Shiba T."/>
            <person name="Hattori M."/>
            <person name="Ogasawara N."/>
            <person name="Hayashi H."/>
            <person name="Hiramatsu K."/>
        </authorList>
    </citation>
    <scope>NUCLEOTIDE SEQUENCE [LARGE SCALE GENOMIC DNA]</scope>
    <source>
        <strain>Mu50 / ATCC 700699</strain>
    </source>
</reference>
<feature type="chain" id="PRO_0000260805" description="UPF0397 protein SAV2685">
    <location>
        <begin position="1"/>
        <end position="184"/>
    </location>
</feature>
<feature type="transmembrane region" description="Helical" evidence="1">
    <location>
        <begin position="11"/>
        <end position="31"/>
    </location>
</feature>
<feature type="transmembrane region" description="Helical" evidence="1">
    <location>
        <begin position="44"/>
        <end position="64"/>
    </location>
</feature>
<feature type="transmembrane region" description="Helical" evidence="1">
    <location>
        <begin position="77"/>
        <end position="97"/>
    </location>
</feature>
<feature type="transmembrane region" description="Helical" evidence="1">
    <location>
        <begin position="111"/>
        <end position="131"/>
    </location>
</feature>
<feature type="transmembrane region" description="Helical" evidence="1">
    <location>
        <begin position="148"/>
        <end position="168"/>
    </location>
</feature>
<name>Y2685_STAAM</name>
<protein>
    <recommendedName>
        <fullName evidence="1">UPF0397 protein SAV2685</fullName>
    </recommendedName>
</protein>
<accession>Q99QV6</accession>
<keyword id="KW-1003">Cell membrane</keyword>
<keyword id="KW-0472">Membrane</keyword>
<keyword id="KW-0812">Transmembrane</keyword>
<keyword id="KW-1133">Transmembrane helix</keyword>